<gene>
    <name evidence="1" type="primary">serS</name>
    <name type="ordered locus">c1030</name>
</gene>
<comment type="function">
    <text evidence="1">Catalyzes the attachment of serine to tRNA(Ser). Is also able to aminoacylate tRNA(Sec) with serine, to form the misacylated tRNA L-seryl-tRNA(Sec), which will be further converted into selenocysteinyl-tRNA(Sec).</text>
</comment>
<comment type="catalytic activity">
    <reaction evidence="1">
        <text>tRNA(Ser) + L-serine + ATP = L-seryl-tRNA(Ser) + AMP + diphosphate + H(+)</text>
        <dbReference type="Rhea" id="RHEA:12292"/>
        <dbReference type="Rhea" id="RHEA-COMP:9669"/>
        <dbReference type="Rhea" id="RHEA-COMP:9703"/>
        <dbReference type="ChEBI" id="CHEBI:15378"/>
        <dbReference type="ChEBI" id="CHEBI:30616"/>
        <dbReference type="ChEBI" id="CHEBI:33019"/>
        <dbReference type="ChEBI" id="CHEBI:33384"/>
        <dbReference type="ChEBI" id="CHEBI:78442"/>
        <dbReference type="ChEBI" id="CHEBI:78533"/>
        <dbReference type="ChEBI" id="CHEBI:456215"/>
        <dbReference type="EC" id="6.1.1.11"/>
    </reaction>
</comment>
<comment type="catalytic activity">
    <reaction evidence="1">
        <text>tRNA(Sec) + L-serine + ATP = L-seryl-tRNA(Sec) + AMP + diphosphate + H(+)</text>
        <dbReference type="Rhea" id="RHEA:42580"/>
        <dbReference type="Rhea" id="RHEA-COMP:9742"/>
        <dbReference type="Rhea" id="RHEA-COMP:10128"/>
        <dbReference type="ChEBI" id="CHEBI:15378"/>
        <dbReference type="ChEBI" id="CHEBI:30616"/>
        <dbReference type="ChEBI" id="CHEBI:33019"/>
        <dbReference type="ChEBI" id="CHEBI:33384"/>
        <dbReference type="ChEBI" id="CHEBI:78442"/>
        <dbReference type="ChEBI" id="CHEBI:78533"/>
        <dbReference type="ChEBI" id="CHEBI:456215"/>
        <dbReference type="EC" id="6.1.1.11"/>
    </reaction>
</comment>
<comment type="pathway">
    <text evidence="1">Aminoacyl-tRNA biosynthesis; selenocysteinyl-tRNA(Sec) biosynthesis; L-seryl-tRNA(Sec) from L-serine and tRNA(Sec): step 1/1.</text>
</comment>
<comment type="subunit">
    <text evidence="1">Homodimer. The tRNA molecule binds across the dimer.</text>
</comment>
<comment type="subcellular location">
    <subcellularLocation>
        <location evidence="1">Cytoplasm</location>
    </subcellularLocation>
</comment>
<comment type="domain">
    <text evidence="1">Consists of two distinct domains, a catalytic core and a N-terminal extension that is involved in tRNA binding.</text>
</comment>
<comment type="similarity">
    <text evidence="1">Belongs to the class-II aminoacyl-tRNA synthetase family. Type-1 seryl-tRNA synthetase subfamily.</text>
</comment>
<protein>
    <recommendedName>
        <fullName evidence="1">Serine--tRNA ligase</fullName>
        <ecNumber evidence="1">6.1.1.11</ecNumber>
    </recommendedName>
    <alternativeName>
        <fullName evidence="1">Seryl-tRNA synthetase</fullName>
        <shortName evidence="1">SerRS</shortName>
    </alternativeName>
    <alternativeName>
        <fullName evidence="1">Seryl-tRNA(Ser/Sec) synthetase</fullName>
    </alternativeName>
</protein>
<name>SYS_ECOL6</name>
<reference key="1">
    <citation type="journal article" date="2002" name="Proc. Natl. Acad. Sci. U.S.A.">
        <title>Extensive mosaic structure revealed by the complete genome sequence of uropathogenic Escherichia coli.</title>
        <authorList>
            <person name="Welch R.A."/>
            <person name="Burland V."/>
            <person name="Plunkett G. III"/>
            <person name="Redford P."/>
            <person name="Roesch P."/>
            <person name="Rasko D."/>
            <person name="Buckles E.L."/>
            <person name="Liou S.-R."/>
            <person name="Boutin A."/>
            <person name="Hackett J."/>
            <person name="Stroud D."/>
            <person name="Mayhew G.F."/>
            <person name="Rose D.J."/>
            <person name="Zhou S."/>
            <person name="Schwartz D.C."/>
            <person name="Perna N.T."/>
            <person name="Mobley H.L.T."/>
            <person name="Donnenberg M.S."/>
            <person name="Blattner F.R."/>
        </authorList>
    </citation>
    <scope>NUCLEOTIDE SEQUENCE [LARGE SCALE GENOMIC DNA]</scope>
    <source>
        <strain>CFT073 / ATCC 700928 / UPEC</strain>
    </source>
</reference>
<proteinExistence type="inferred from homology"/>
<sequence>MLDPNLLRNEPDAVAEKLARRGFKLDVDKLGALEERRKVLQVKTENLQAERNSRSKSIGQAKARGEDIEPLRLEVNKLGEELDAAKAELDALQAEIRDIALTIPNLPADEVPVGKDENDNVEVSRWGTPREFDFEVRDHVTLGEMHSGLDFAAAVKLTGSRFVVMKGQIARMHRALSQFMLDLHTEQHGYSENYVPYLVNQDTLYGTGQLPKFAGDLFHTRPLEEEADTSNYALIPTAEVPLTNLVRGEIIDEDDLPIKMTAHTPCFRSEAGSYGRDTRGLIRMHQFDKVEMVQIVRPEDSMAALEEMTGHAEKVLQLLGLPYRKIILCTGDMGFGACKTYDLEVWIPAQNTYREISSCSNVWDFQARRMQARCRSKSDKKTRLVHTLNGSGLAVGRTLVAVMENYQQADGRIEVPEVLRPYMNGLEYIG</sequence>
<accession>P0A8L2</accession>
<accession>P09156</accession>
<evidence type="ECO:0000255" key="1">
    <source>
        <dbReference type="HAMAP-Rule" id="MF_00176"/>
    </source>
</evidence>
<dbReference type="EC" id="6.1.1.11" evidence="1"/>
<dbReference type="EMBL" id="AE014075">
    <property type="protein sequence ID" value="AAN79502.1"/>
    <property type="molecule type" value="Genomic_DNA"/>
</dbReference>
<dbReference type="RefSeq" id="WP_000886683.1">
    <property type="nucleotide sequence ID" value="NZ_CP051263.1"/>
</dbReference>
<dbReference type="SMR" id="P0A8L2"/>
<dbReference type="STRING" id="199310.c1030"/>
<dbReference type="GeneID" id="93776527"/>
<dbReference type="KEGG" id="ecc:c1030"/>
<dbReference type="eggNOG" id="COG0172">
    <property type="taxonomic scope" value="Bacteria"/>
</dbReference>
<dbReference type="HOGENOM" id="CLU_023797_1_1_6"/>
<dbReference type="BioCyc" id="ECOL199310:C1030-MONOMER"/>
<dbReference type="UniPathway" id="UPA00906">
    <property type="reaction ID" value="UER00895"/>
</dbReference>
<dbReference type="Proteomes" id="UP000001410">
    <property type="component" value="Chromosome"/>
</dbReference>
<dbReference type="GO" id="GO:0005737">
    <property type="term" value="C:cytoplasm"/>
    <property type="evidence" value="ECO:0007669"/>
    <property type="project" value="UniProtKB-SubCell"/>
</dbReference>
<dbReference type="GO" id="GO:0005524">
    <property type="term" value="F:ATP binding"/>
    <property type="evidence" value="ECO:0007669"/>
    <property type="project" value="UniProtKB-UniRule"/>
</dbReference>
<dbReference type="GO" id="GO:0004828">
    <property type="term" value="F:serine-tRNA ligase activity"/>
    <property type="evidence" value="ECO:0007669"/>
    <property type="project" value="UniProtKB-UniRule"/>
</dbReference>
<dbReference type="GO" id="GO:0016260">
    <property type="term" value="P:selenocysteine biosynthetic process"/>
    <property type="evidence" value="ECO:0007669"/>
    <property type="project" value="UniProtKB-UniRule"/>
</dbReference>
<dbReference type="GO" id="GO:0006434">
    <property type="term" value="P:seryl-tRNA aminoacylation"/>
    <property type="evidence" value="ECO:0007669"/>
    <property type="project" value="UniProtKB-UniRule"/>
</dbReference>
<dbReference type="CDD" id="cd00770">
    <property type="entry name" value="SerRS_core"/>
    <property type="match status" value="1"/>
</dbReference>
<dbReference type="FunFam" id="1.10.287.40:FF:000001">
    <property type="entry name" value="Serine--tRNA ligase"/>
    <property type="match status" value="1"/>
</dbReference>
<dbReference type="FunFam" id="3.30.930.10:FF:000018">
    <property type="entry name" value="Serine--tRNA ligase"/>
    <property type="match status" value="1"/>
</dbReference>
<dbReference type="Gene3D" id="3.30.930.10">
    <property type="entry name" value="Bira Bifunctional Protein, Domain 2"/>
    <property type="match status" value="1"/>
</dbReference>
<dbReference type="Gene3D" id="1.10.287.40">
    <property type="entry name" value="Serine-tRNA synthetase, tRNA binding domain"/>
    <property type="match status" value="1"/>
</dbReference>
<dbReference type="HAMAP" id="MF_00176">
    <property type="entry name" value="Ser_tRNA_synth_type1"/>
    <property type="match status" value="1"/>
</dbReference>
<dbReference type="InterPro" id="IPR002314">
    <property type="entry name" value="aa-tRNA-synt_IIb"/>
</dbReference>
<dbReference type="InterPro" id="IPR006195">
    <property type="entry name" value="aa-tRNA-synth_II"/>
</dbReference>
<dbReference type="InterPro" id="IPR045864">
    <property type="entry name" value="aa-tRNA-synth_II/BPL/LPL"/>
</dbReference>
<dbReference type="InterPro" id="IPR002317">
    <property type="entry name" value="Ser-tRNA-ligase_type_1"/>
</dbReference>
<dbReference type="InterPro" id="IPR015866">
    <property type="entry name" value="Ser-tRNA-synth_1_N"/>
</dbReference>
<dbReference type="InterPro" id="IPR042103">
    <property type="entry name" value="SerRS_1_N_sf"/>
</dbReference>
<dbReference type="InterPro" id="IPR033729">
    <property type="entry name" value="SerRS_core"/>
</dbReference>
<dbReference type="InterPro" id="IPR010978">
    <property type="entry name" value="tRNA-bd_arm"/>
</dbReference>
<dbReference type="NCBIfam" id="TIGR00414">
    <property type="entry name" value="serS"/>
    <property type="match status" value="1"/>
</dbReference>
<dbReference type="PANTHER" id="PTHR43697:SF1">
    <property type="entry name" value="SERINE--TRNA LIGASE"/>
    <property type="match status" value="1"/>
</dbReference>
<dbReference type="PANTHER" id="PTHR43697">
    <property type="entry name" value="SERYL-TRNA SYNTHETASE"/>
    <property type="match status" value="1"/>
</dbReference>
<dbReference type="Pfam" id="PF02403">
    <property type="entry name" value="Seryl_tRNA_N"/>
    <property type="match status" value="1"/>
</dbReference>
<dbReference type="Pfam" id="PF00587">
    <property type="entry name" value="tRNA-synt_2b"/>
    <property type="match status" value="1"/>
</dbReference>
<dbReference type="PIRSF" id="PIRSF001529">
    <property type="entry name" value="Ser-tRNA-synth_IIa"/>
    <property type="match status" value="1"/>
</dbReference>
<dbReference type="PRINTS" id="PR00981">
    <property type="entry name" value="TRNASYNTHSER"/>
</dbReference>
<dbReference type="SUPFAM" id="SSF55681">
    <property type="entry name" value="Class II aaRS and biotin synthetases"/>
    <property type="match status" value="1"/>
</dbReference>
<dbReference type="SUPFAM" id="SSF46589">
    <property type="entry name" value="tRNA-binding arm"/>
    <property type="match status" value="1"/>
</dbReference>
<dbReference type="PROSITE" id="PS50862">
    <property type="entry name" value="AA_TRNA_LIGASE_II"/>
    <property type="match status" value="1"/>
</dbReference>
<keyword id="KW-0030">Aminoacyl-tRNA synthetase</keyword>
<keyword id="KW-0067">ATP-binding</keyword>
<keyword id="KW-0963">Cytoplasm</keyword>
<keyword id="KW-0436">Ligase</keyword>
<keyword id="KW-0547">Nucleotide-binding</keyword>
<keyword id="KW-0648">Protein biosynthesis</keyword>
<keyword id="KW-1185">Reference proteome</keyword>
<organism>
    <name type="scientific">Escherichia coli O6:H1 (strain CFT073 / ATCC 700928 / UPEC)</name>
    <dbReference type="NCBI Taxonomy" id="199310"/>
    <lineage>
        <taxon>Bacteria</taxon>
        <taxon>Pseudomonadati</taxon>
        <taxon>Pseudomonadota</taxon>
        <taxon>Gammaproteobacteria</taxon>
        <taxon>Enterobacterales</taxon>
        <taxon>Enterobacteriaceae</taxon>
        <taxon>Escherichia</taxon>
    </lineage>
</organism>
<feature type="chain" id="PRO_0000122046" description="Serine--tRNA ligase">
    <location>
        <begin position="1"/>
        <end position="430"/>
    </location>
</feature>
<feature type="binding site" evidence="1">
    <location>
        <begin position="237"/>
        <end position="239"/>
    </location>
    <ligand>
        <name>L-serine</name>
        <dbReference type="ChEBI" id="CHEBI:33384"/>
    </ligand>
</feature>
<feature type="binding site" evidence="1">
    <location>
        <begin position="268"/>
        <end position="270"/>
    </location>
    <ligand>
        <name>ATP</name>
        <dbReference type="ChEBI" id="CHEBI:30616"/>
    </ligand>
</feature>
<feature type="binding site" evidence="1">
    <location>
        <position position="291"/>
    </location>
    <ligand>
        <name>L-serine</name>
        <dbReference type="ChEBI" id="CHEBI:33384"/>
    </ligand>
</feature>
<feature type="binding site" evidence="1">
    <location>
        <begin position="355"/>
        <end position="358"/>
    </location>
    <ligand>
        <name>ATP</name>
        <dbReference type="ChEBI" id="CHEBI:30616"/>
    </ligand>
</feature>
<feature type="binding site" evidence="1">
    <location>
        <position position="391"/>
    </location>
    <ligand>
        <name>L-serine</name>
        <dbReference type="ChEBI" id="CHEBI:33384"/>
    </ligand>
</feature>